<protein>
    <recommendedName>
        <fullName evidence="1">Ornithine aminotransferase 1</fullName>
        <shortName evidence="1">OAT 1</shortName>
        <ecNumber evidence="1">2.6.1.13</ecNumber>
    </recommendedName>
    <alternativeName>
        <fullName evidence="1">Ornithine--oxo-acid aminotransferase 1</fullName>
    </alternativeName>
</protein>
<comment type="function">
    <text evidence="1">Catalyzes the interconversion of ornithine to glutamate semialdehyde.</text>
</comment>
<comment type="catalytic activity">
    <reaction evidence="1">
        <text>a 2-oxocarboxylate + L-ornithine = L-glutamate 5-semialdehyde + an L-alpha-amino acid</text>
        <dbReference type="Rhea" id="RHEA:13877"/>
        <dbReference type="ChEBI" id="CHEBI:35179"/>
        <dbReference type="ChEBI" id="CHEBI:46911"/>
        <dbReference type="ChEBI" id="CHEBI:58066"/>
        <dbReference type="ChEBI" id="CHEBI:59869"/>
        <dbReference type="EC" id="2.6.1.13"/>
    </reaction>
</comment>
<comment type="cofactor">
    <cofactor evidence="1">
        <name>pyridoxal 5'-phosphate</name>
        <dbReference type="ChEBI" id="CHEBI:597326"/>
    </cofactor>
</comment>
<comment type="pathway">
    <text evidence="1">Amino-acid biosynthesis; L-proline biosynthesis; L-glutamate 5-semialdehyde from L-ornithine: step 1/1.</text>
</comment>
<comment type="subcellular location">
    <subcellularLocation>
        <location evidence="1">Cytoplasm</location>
    </subcellularLocation>
</comment>
<comment type="similarity">
    <text evidence="1">Belongs to the class-III pyridoxal-phosphate-dependent aminotransferase family. OAT subfamily.</text>
</comment>
<organism>
    <name type="scientific">Staphylococcus aureus (strain COL)</name>
    <dbReference type="NCBI Taxonomy" id="93062"/>
    <lineage>
        <taxon>Bacteria</taxon>
        <taxon>Bacillati</taxon>
        <taxon>Bacillota</taxon>
        <taxon>Bacilli</taxon>
        <taxon>Bacillales</taxon>
        <taxon>Staphylococcaceae</taxon>
        <taxon>Staphylococcus</taxon>
    </lineage>
</organism>
<reference key="1">
    <citation type="journal article" date="2005" name="J. Bacteriol.">
        <title>Insights on evolution of virulence and resistance from the complete genome analysis of an early methicillin-resistant Staphylococcus aureus strain and a biofilm-producing methicillin-resistant Staphylococcus epidermidis strain.</title>
        <authorList>
            <person name="Gill S.R."/>
            <person name="Fouts D.E."/>
            <person name="Archer G.L."/>
            <person name="Mongodin E.F."/>
            <person name="DeBoy R.T."/>
            <person name="Ravel J."/>
            <person name="Paulsen I.T."/>
            <person name="Kolonay J.F."/>
            <person name="Brinkac L.M."/>
            <person name="Beanan M.J."/>
            <person name="Dodson R.J."/>
            <person name="Daugherty S.C."/>
            <person name="Madupu R."/>
            <person name="Angiuoli S.V."/>
            <person name="Durkin A.S."/>
            <person name="Haft D.H."/>
            <person name="Vamathevan J.J."/>
            <person name="Khouri H."/>
            <person name="Utterback T.R."/>
            <person name="Lee C."/>
            <person name="Dimitrov G."/>
            <person name="Jiang L."/>
            <person name="Qin H."/>
            <person name="Weidman J."/>
            <person name="Tran K."/>
            <person name="Kang K.H."/>
            <person name="Hance I.R."/>
            <person name="Nelson K.E."/>
            <person name="Fraser C.M."/>
        </authorList>
    </citation>
    <scope>NUCLEOTIDE SEQUENCE [LARGE SCALE GENOMIC DNA]</scope>
    <source>
        <strain>COL</strain>
    </source>
</reference>
<evidence type="ECO:0000255" key="1">
    <source>
        <dbReference type="HAMAP-Rule" id="MF_01689"/>
    </source>
</evidence>
<keyword id="KW-0028">Amino-acid biosynthesis</keyword>
<keyword id="KW-0032">Aminotransferase</keyword>
<keyword id="KW-0963">Cytoplasm</keyword>
<keyword id="KW-0641">Proline biosynthesis</keyword>
<keyword id="KW-0663">Pyridoxal phosphate</keyword>
<keyword id="KW-0808">Transferase</keyword>
<sequence>MNSIIELTDYYSSNNYAPLKLVISKGKGVKVWDTDGKQYIDCISGFSVANQGHCHPTIVKAMTEQASKLSIISRVLYSDNLGKWEEKICHLAKKDKVLPLNSGTEAVEAAIKIARKWGSEVKGITDGQVEIIAMNNNFHGRTLGSLSLSNHDAYKAGFHPLLQGTTTVDFGDIEQLTQAISPNTAAIILEPIQGEGGVNIPPKGYIQAVRQLCDKHQILLIADEIQVGLGRTGKWFAMEWEQVVPDIYILGKALGGGLYPVSAVLANNDVMRVLTPGTHGSTFGGNPLAIAISTAALDVLKDEQLVERSERLGSFLLKALLQLKHPSIKEIRGRGLFIGIELNTDAAPFVDQLIQRGILCKDTHRTIIRLSPPLVIDKEEIHQIVAAFQDVFKN</sequence>
<proteinExistence type="inferred from homology"/>
<name>OAT1_STAAC</name>
<feature type="chain" id="PRO_0000112780" description="Ornithine aminotransferase 1">
    <location>
        <begin position="1"/>
        <end position="394"/>
    </location>
</feature>
<feature type="modified residue" description="N6-(pyridoxal phosphate)lysine" evidence="1">
    <location>
        <position position="252"/>
    </location>
</feature>
<dbReference type="EC" id="2.6.1.13" evidence="1"/>
<dbReference type="EMBL" id="CP000046">
    <property type="protein sequence ID" value="AAW37466.1"/>
    <property type="molecule type" value="Genomic_DNA"/>
</dbReference>
<dbReference type="SMR" id="Q5HJI8"/>
<dbReference type="KEGG" id="sac:SACOL0170"/>
<dbReference type="HOGENOM" id="CLU_016922_10_1_9"/>
<dbReference type="UniPathway" id="UPA00098">
    <property type="reaction ID" value="UER00358"/>
</dbReference>
<dbReference type="Proteomes" id="UP000000530">
    <property type="component" value="Chromosome"/>
</dbReference>
<dbReference type="GO" id="GO:0005737">
    <property type="term" value="C:cytoplasm"/>
    <property type="evidence" value="ECO:0007669"/>
    <property type="project" value="UniProtKB-SubCell"/>
</dbReference>
<dbReference type="GO" id="GO:0042802">
    <property type="term" value="F:identical protein binding"/>
    <property type="evidence" value="ECO:0007669"/>
    <property type="project" value="TreeGrafter"/>
</dbReference>
<dbReference type="GO" id="GO:0004587">
    <property type="term" value="F:ornithine aminotransferase activity"/>
    <property type="evidence" value="ECO:0007669"/>
    <property type="project" value="UniProtKB-UniRule"/>
</dbReference>
<dbReference type="GO" id="GO:0030170">
    <property type="term" value="F:pyridoxal phosphate binding"/>
    <property type="evidence" value="ECO:0007669"/>
    <property type="project" value="UniProtKB-UniRule"/>
</dbReference>
<dbReference type="GO" id="GO:0006525">
    <property type="term" value="P:arginine metabolic process"/>
    <property type="evidence" value="ECO:0007669"/>
    <property type="project" value="InterPro"/>
</dbReference>
<dbReference type="GO" id="GO:0055129">
    <property type="term" value="P:L-proline biosynthetic process"/>
    <property type="evidence" value="ECO:0007669"/>
    <property type="project" value="UniProtKB-UniRule"/>
</dbReference>
<dbReference type="CDD" id="cd00610">
    <property type="entry name" value="OAT_like"/>
    <property type="match status" value="1"/>
</dbReference>
<dbReference type="FunFam" id="3.40.640.10:FF:000011">
    <property type="entry name" value="Ornithine aminotransferase"/>
    <property type="match status" value="1"/>
</dbReference>
<dbReference type="Gene3D" id="3.90.1150.10">
    <property type="entry name" value="Aspartate Aminotransferase, domain 1"/>
    <property type="match status" value="1"/>
</dbReference>
<dbReference type="Gene3D" id="3.40.640.10">
    <property type="entry name" value="Type I PLP-dependent aspartate aminotransferase-like (Major domain)"/>
    <property type="match status" value="1"/>
</dbReference>
<dbReference type="HAMAP" id="MF_01689">
    <property type="entry name" value="Ornith_aminotrans_3"/>
    <property type="match status" value="1"/>
</dbReference>
<dbReference type="InterPro" id="IPR004636">
    <property type="entry name" value="AcOrn/SuccOrn_fam"/>
</dbReference>
<dbReference type="InterPro" id="IPR005814">
    <property type="entry name" value="Aminotrans_3"/>
</dbReference>
<dbReference type="InterPro" id="IPR049704">
    <property type="entry name" value="Aminotrans_3_PPA_site"/>
</dbReference>
<dbReference type="InterPro" id="IPR050103">
    <property type="entry name" value="Class-III_PLP-dep_AT"/>
</dbReference>
<dbReference type="InterPro" id="IPR010164">
    <property type="entry name" value="Orn_aminotrans"/>
</dbReference>
<dbReference type="InterPro" id="IPR034757">
    <property type="entry name" value="Ornith_aminotrans_bact"/>
</dbReference>
<dbReference type="InterPro" id="IPR015424">
    <property type="entry name" value="PyrdxlP-dep_Trfase"/>
</dbReference>
<dbReference type="InterPro" id="IPR015421">
    <property type="entry name" value="PyrdxlP-dep_Trfase_major"/>
</dbReference>
<dbReference type="InterPro" id="IPR015422">
    <property type="entry name" value="PyrdxlP-dep_Trfase_small"/>
</dbReference>
<dbReference type="NCBIfam" id="TIGR00707">
    <property type="entry name" value="argD"/>
    <property type="match status" value="1"/>
</dbReference>
<dbReference type="NCBIfam" id="TIGR01885">
    <property type="entry name" value="Orn_aminotrans"/>
    <property type="match status" value="1"/>
</dbReference>
<dbReference type="NCBIfam" id="NF002325">
    <property type="entry name" value="PRK01278.1"/>
    <property type="match status" value="1"/>
</dbReference>
<dbReference type="PANTHER" id="PTHR11986">
    <property type="entry name" value="AMINOTRANSFERASE CLASS III"/>
    <property type="match status" value="1"/>
</dbReference>
<dbReference type="PANTHER" id="PTHR11986:SF18">
    <property type="entry name" value="ORNITHINE AMINOTRANSFERASE, MITOCHONDRIAL"/>
    <property type="match status" value="1"/>
</dbReference>
<dbReference type="Pfam" id="PF00202">
    <property type="entry name" value="Aminotran_3"/>
    <property type="match status" value="1"/>
</dbReference>
<dbReference type="PIRSF" id="PIRSF000521">
    <property type="entry name" value="Transaminase_4ab_Lys_Orn"/>
    <property type="match status" value="1"/>
</dbReference>
<dbReference type="SUPFAM" id="SSF53383">
    <property type="entry name" value="PLP-dependent transferases"/>
    <property type="match status" value="1"/>
</dbReference>
<dbReference type="PROSITE" id="PS00600">
    <property type="entry name" value="AA_TRANSFER_CLASS_3"/>
    <property type="match status" value="1"/>
</dbReference>
<gene>
    <name evidence="1" type="primary">rocD1</name>
    <name type="ordered locus">SACOL0170</name>
</gene>
<accession>Q5HJI8</accession>